<feature type="chain" id="PRO_1000100033" description="Dihydroorotase">
    <location>
        <begin position="1"/>
        <end position="344"/>
    </location>
</feature>
<feature type="active site" evidence="1">
    <location>
        <position position="247"/>
    </location>
</feature>
<feature type="binding site" evidence="1">
    <location>
        <position position="13"/>
    </location>
    <ligand>
        <name>Zn(2+)</name>
        <dbReference type="ChEBI" id="CHEBI:29105"/>
        <label>1</label>
    </ligand>
</feature>
<feature type="binding site" evidence="1">
    <location>
        <begin position="15"/>
        <end position="17"/>
    </location>
    <ligand>
        <name>substrate</name>
    </ligand>
</feature>
<feature type="binding site" evidence="1">
    <location>
        <position position="15"/>
    </location>
    <ligand>
        <name>Zn(2+)</name>
        <dbReference type="ChEBI" id="CHEBI:29105"/>
        <label>1</label>
    </ligand>
</feature>
<feature type="binding site" evidence="1">
    <location>
        <position position="41"/>
    </location>
    <ligand>
        <name>substrate</name>
    </ligand>
</feature>
<feature type="binding site" description="via carbamate group" evidence="1">
    <location>
        <position position="99"/>
    </location>
    <ligand>
        <name>Zn(2+)</name>
        <dbReference type="ChEBI" id="CHEBI:29105"/>
        <label>1</label>
    </ligand>
</feature>
<feature type="binding site" description="via carbamate group" evidence="1">
    <location>
        <position position="99"/>
    </location>
    <ligand>
        <name>Zn(2+)</name>
        <dbReference type="ChEBI" id="CHEBI:29105"/>
        <label>2</label>
    </ligand>
</feature>
<feature type="binding site" evidence="1">
    <location>
        <position position="136"/>
    </location>
    <ligand>
        <name>substrate</name>
    </ligand>
</feature>
<feature type="binding site" evidence="1">
    <location>
        <position position="136"/>
    </location>
    <ligand>
        <name>Zn(2+)</name>
        <dbReference type="ChEBI" id="CHEBI:29105"/>
        <label>2</label>
    </ligand>
</feature>
<feature type="binding site" evidence="1">
    <location>
        <position position="174"/>
    </location>
    <ligand>
        <name>Zn(2+)</name>
        <dbReference type="ChEBI" id="CHEBI:29105"/>
        <label>2</label>
    </ligand>
</feature>
<feature type="binding site" evidence="1">
    <location>
        <position position="219"/>
    </location>
    <ligand>
        <name>substrate</name>
    </ligand>
</feature>
<feature type="binding site" evidence="1">
    <location>
        <position position="247"/>
    </location>
    <ligand>
        <name>Zn(2+)</name>
        <dbReference type="ChEBI" id="CHEBI:29105"/>
        <label>1</label>
    </ligand>
</feature>
<feature type="binding site" evidence="1">
    <location>
        <position position="251"/>
    </location>
    <ligand>
        <name>substrate</name>
    </ligand>
</feature>
<feature type="binding site" evidence="1">
    <location>
        <position position="263"/>
    </location>
    <ligand>
        <name>substrate</name>
    </ligand>
</feature>
<feature type="modified residue" description="N6-carboxylysine" evidence="1">
    <location>
        <position position="99"/>
    </location>
</feature>
<proteinExistence type="inferred from homology"/>
<dbReference type="EC" id="3.5.2.3" evidence="1"/>
<dbReference type="EMBL" id="CU468230">
    <property type="protein sequence ID" value="CAP00719.1"/>
    <property type="molecule type" value="Genomic_DNA"/>
</dbReference>
<dbReference type="SMR" id="B0VKW9"/>
<dbReference type="KEGG" id="abm:ABSDF1373"/>
<dbReference type="HOGENOM" id="CLU_041558_1_0_6"/>
<dbReference type="UniPathway" id="UPA00070">
    <property type="reaction ID" value="UER00117"/>
</dbReference>
<dbReference type="Proteomes" id="UP000001741">
    <property type="component" value="Chromosome"/>
</dbReference>
<dbReference type="GO" id="GO:0005829">
    <property type="term" value="C:cytosol"/>
    <property type="evidence" value="ECO:0007669"/>
    <property type="project" value="TreeGrafter"/>
</dbReference>
<dbReference type="GO" id="GO:0004151">
    <property type="term" value="F:dihydroorotase activity"/>
    <property type="evidence" value="ECO:0007669"/>
    <property type="project" value="UniProtKB-UniRule"/>
</dbReference>
<dbReference type="GO" id="GO:0008270">
    <property type="term" value="F:zinc ion binding"/>
    <property type="evidence" value="ECO:0007669"/>
    <property type="project" value="UniProtKB-UniRule"/>
</dbReference>
<dbReference type="GO" id="GO:0006207">
    <property type="term" value="P:'de novo' pyrimidine nucleobase biosynthetic process"/>
    <property type="evidence" value="ECO:0007669"/>
    <property type="project" value="TreeGrafter"/>
</dbReference>
<dbReference type="GO" id="GO:0044205">
    <property type="term" value="P:'de novo' UMP biosynthetic process"/>
    <property type="evidence" value="ECO:0007669"/>
    <property type="project" value="UniProtKB-UniRule"/>
</dbReference>
<dbReference type="CDD" id="cd01294">
    <property type="entry name" value="DHOase"/>
    <property type="match status" value="1"/>
</dbReference>
<dbReference type="FunFam" id="3.20.20.140:FF:000006">
    <property type="entry name" value="Dihydroorotase"/>
    <property type="match status" value="1"/>
</dbReference>
<dbReference type="Gene3D" id="3.20.20.140">
    <property type="entry name" value="Metal-dependent hydrolases"/>
    <property type="match status" value="1"/>
</dbReference>
<dbReference type="HAMAP" id="MF_00219">
    <property type="entry name" value="PyrC_classII"/>
    <property type="match status" value="1"/>
</dbReference>
<dbReference type="InterPro" id="IPR006680">
    <property type="entry name" value="Amidohydro-rel"/>
</dbReference>
<dbReference type="InterPro" id="IPR004721">
    <property type="entry name" value="DHOdimr"/>
</dbReference>
<dbReference type="InterPro" id="IPR002195">
    <property type="entry name" value="Dihydroorotase_CS"/>
</dbReference>
<dbReference type="InterPro" id="IPR032466">
    <property type="entry name" value="Metal_Hydrolase"/>
</dbReference>
<dbReference type="NCBIfam" id="TIGR00856">
    <property type="entry name" value="pyrC_dimer"/>
    <property type="match status" value="1"/>
</dbReference>
<dbReference type="PANTHER" id="PTHR43137">
    <property type="entry name" value="DIHYDROOROTASE"/>
    <property type="match status" value="1"/>
</dbReference>
<dbReference type="PANTHER" id="PTHR43137:SF1">
    <property type="entry name" value="DIHYDROOROTASE"/>
    <property type="match status" value="1"/>
</dbReference>
<dbReference type="Pfam" id="PF01979">
    <property type="entry name" value="Amidohydro_1"/>
    <property type="match status" value="1"/>
</dbReference>
<dbReference type="PIRSF" id="PIRSF001237">
    <property type="entry name" value="DHOdimr"/>
    <property type="match status" value="1"/>
</dbReference>
<dbReference type="SUPFAM" id="SSF51556">
    <property type="entry name" value="Metallo-dependent hydrolases"/>
    <property type="match status" value="1"/>
</dbReference>
<dbReference type="PROSITE" id="PS00482">
    <property type="entry name" value="DIHYDROOROTASE_1"/>
    <property type="match status" value="1"/>
</dbReference>
<dbReference type="PROSITE" id="PS00483">
    <property type="entry name" value="DIHYDROOROTASE_2"/>
    <property type="match status" value="1"/>
</dbReference>
<keyword id="KW-0378">Hydrolase</keyword>
<keyword id="KW-0479">Metal-binding</keyword>
<keyword id="KW-0665">Pyrimidine biosynthesis</keyword>
<keyword id="KW-0862">Zinc</keyword>
<reference key="1">
    <citation type="journal article" date="2008" name="PLoS ONE">
        <title>Comparative analysis of Acinetobacters: three genomes for three lifestyles.</title>
        <authorList>
            <person name="Vallenet D."/>
            <person name="Nordmann P."/>
            <person name="Barbe V."/>
            <person name="Poirel L."/>
            <person name="Mangenot S."/>
            <person name="Bataille E."/>
            <person name="Dossat C."/>
            <person name="Gas S."/>
            <person name="Kreimeyer A."/>
            <person name="Lenoble P."/>
            <person name="Oztas S."/>
            <person name="Poulain J."/>
            <person name="Segurens B."/>
            <person name="Robert C."/>
            <person name="Abergel C."/>
            <person name="Claverie J.-M."/>
            <person name="Raoult D."/>
            <person name="Medigue C."/>
            <person name="Weissenbach J."/>
            <person name="Cruveiller S."/>
        </authorList>
    </citation>
    <scope>NUCLEOTIDE SEQUENCE [LARGE SCALE GENOMIC DNA]</scope>
    <source>
        <strain>SDF</strain>
    </source>
</reference>
<comment type="function">
    <text evidence="1">Catalyzes the reversible cyclization of carbamoyl aspartate to dihydroorotate.</text>
</comment>
<comment type="catalytic activity">
    <reaction evidence="1">
        <text>(S)-dihydroorotate + H2O = N-carbamoyl-L-aspartate + H(+)</text>
        <dbReference type="Rhea" id="RHEA:24296"/>
        <dbReference type="ChEBI" id="CHEBI:15377"/>
        <dbReference type="ChEBI" id="CHEBI:15378"/>
        <dbReference type="ChEBI" id="CHEBI:30864"/>
        <dbReference type="ChEBI" id="CHEBI:32814"/>
        <dbReference type="EC" id="3.5.2.3"/>
    </reaction>
</comment>
<comment type="cofactor">
    <cofactor evidence="1">
        <name>Zn(2+)</name>
        <dbReference type="ChEBI" id="CHEBI:29105"/>
    </cofactor>
    <text evidence="1">Binds 2 Zn(2+) ions per subunit.</text>
</comment>
<comment type="pathway">
    <text evidence="1">Pyrimidine metabolism; UMP biosynthesis via de novo pathway; (S)-dihydroorotate from bicarbonate: step 3/3.</text>
</comment>
<comment type="subunit">
    <text evidence="1">Homodimer.</text>
</comment>
<comment type="similarity">
    <text evidence="1">Belongs to the metallo-dependent hydrolases superfamily. DHOase family. Class II DHOase subfamily.</text>
</comment>
<protein>
    <recommendedName>
        <fullName evidence="1">Dihydroorotase</fullName>
        <shortName evidence="1">DHOase</shortName>
        <ecNumber evidence="1">3.5.2.3</ecNumber>
    </recommendedName>
</protein>
<accession>B0VKW9</accession>
<organism>
    <name type="scientific">Acinetobacter baumannii (strain SDF)</name>
    <dbReference type="NCBI Taxonomy" id="509170"/>
    <lineage>
        <taxon>Bacteria</taxon>
        <taxon>Pseudomonadati</taxon>
        <taxon>Pseudomonadota</taxon>
        <taxon>Gammaproteobacteria</taxon>
        <taxon>Moraxellales</taxon>
        <taxon>Moraxellaceae</taxon>
        <taxon>Acinetobacter</taxon>
        <taxon>Acinetobacter calcoaceticus/baumannii complex</taxon>
    </lineage>
</organism>
<evidence type="ECO:0000255" key="1">
    <source>
        <dbReference type="HAMAP-Rule" id="MF_00219"/>
    </source>
</evidence>
<sequence>MNSITLLQPDDWHAHLRDGLALKRTVPDLAKQFARAICMPNLVPPVKTVEEALAYRERILAHVPEGNNFDPRMVLYFTDHTSPDEVRKIKESEHVNAIKLYPAGATTNSNNGVSDIRKVYAVIEQLEEHQVPLLLHGEVTHNHVDIFDREKRFLDEVLSPLLKQFPKLKVVLEHITTSDAAHFVLEQDRNVAATITPQHLLFNRNDMLVGGIKPYFYCLPILKRQTHQTTLLEVATSGNPKFFLGTDSAPHAQNAKENACGCAGCYSAPNAIELYAQAFDQVGKLERLEGFASHFGADFYGLPRNTSTITLVKEDNLVPESFDYLDNQKIIPLHAGKTLQWRKV</sequence>
<gene>
    <name evidence="1" type="primary">pyrC</name>
    <name type="ordered locus">ABSDF1373</name>
</gene>
<name>PYRC_ACIBS</name>